<evidence type="ECO:0000255" key="1">
    <source>
        <dbReference type="HAMAP-Rule" id="MF_01014"/>
    </source>
</evidence>
<name>HIS4_YERPG</name>
<proteinExistence type="inferred from homology"/>
<organism>
    <name type="scientific">Yersinia pestis bv. Antiqua (strain Angola)</name>
    <dbReference type="NCBI Taxonomy" id="349746"/>
    <lineage>
        <taxon>Bacteria</taxon>
        <taxon>Pseudomonadati</taxon>
        <taxon>Pseudomonadota</taxon>
        <taxon>Gammaproteobacteria</taxon>
        <taxon>Enterobacterales</taxon>
        <taxon>Yersiniaceae</taxon>
        <taxon>Yersinia</taxon>
    </lineage>
</organism>
<gene>
    <name evidence="1" type="primary">hisA</name>
    <name type="ordered locus">YpAngola_A3174</name>
</gene>
<protein>
    <recommendedName>
        <fullName evidence="1">1-(5-phosphoribosyl)-5-[(5-phosphoribosylamino)methylideneamino] imidazole-4-carboxamide isomerase</fullName>
        <ecNumber evidence="1">5.3.1.16</ecNumber>
    </recommendedName>
    <alternativeName>
        <fullName evidence="1">Phosphoribosylformimino-5-aminoimidazole carboxamide ribotide isomerase</fullName>
    </alternativeName>
</protein>
<keyword id="KW-0028">Amino-acid biosynthesis</keyword>
<keyword id="KW-0963">Cytoplasm</keyword>
<keyword id="KW-0368">Histidine biosynthesis</keyword>
<keyword id="KW-0413">Isomerase</keyword>
<comment type="catalytic activity">
    <reaction evidence="1">
        <text>1-(5-phospho-beta-D-ribosyl)-5-[(5-phospho-beta-D-ribosylamino)methylideneamino]imidazole-4-carboxamide = 5-[(5-phospho-1-deoxy-D-ribulos-1-ylimino)methylamino]-1-(5-phospho-beta-D-ribosyl)imidazole-4-carboxamide</text>
        <dbReference type="Rhea" id="RHEA:15469"/>
        <dbReference type="ChEBI" id="CHEBI:58435"/>
        <dbReference type="ChEBI" id="CHEBI:58525"/>
        <dbReference type="EC" id="5.3.1.16"/>
    </reaction>
</comment>
<comment type="pathway">
    <text evidence="1">Amino-acid biosynthesis; L-histidine biosynthesis; L-histidine from 5-phospho-alpha-D-ribose 1-diphosphate: step 4/9.</text>
</comment>
<comment type="subcellular location">
    <subcellularLocation>
        <location evidence="1">Cytoplasm</location>
    </subcellularLocation>
</comment>
<comment type="similarity">
    <text evidence="1">Belongs to the HisA/HisF family.</text>
</comment>
<accession>A9R2K8</accession>
<dbReference type="EC" id="5.3.1.16" evidence="1"/>
<dbReference type="EMBL" id="CP000901">
    <property type="protein sequence ID" value="ABX87751.1"/>
    <property type="molecule type" value="Genomic_DNA"/>
</dbReference>
<dbReference type="RefSeq" id="WP_002211891.1">
    <property type="nucleotide sequence ID" value="NZ_CP009935.1"/>
</dbReference>
<dbReference type="SMR" id="A9R2K8"/>
<dbReference type="GeneID" id="96665163"/>
<dbReference type="KEGG" id="ypg:YpAngola_A3174"/>
<dbReference type="PATRIC" id="fig|349746.12.peg.4233"/>
<dbReference type="UniPathway" id="UPA00031">
    <property type="reaction ID" value="UER00009"/>
</dbReference>
<dbReference type="GO" id="GO:0005737">
    <property type="term" value="C:cytoplasm"/>
    <property type="evidence" value="ECO:0007669"/>
    <property type="project" value="UniProtKB-SubCell"/>
</dbReference>
<dbReference type="GO" id="GO:0003949">
    <property type="term" value="F:1-(5-phosphoribosyl)-5-[(5-phosphoribosylamino)methylideneamino]imidazole-4-carboxamide isomerase activity"/>
    <property type="evidence" value="ECO:0007669"/>
    <property type="project" value="UniProtKB-UniRule"/>
</dbReference>
<dbReference type="GO" id="GO:0000105">
    <property type="term" value="P:L-histidine biosynthetic process"/>
    <property type="evidence" value="ECO:0007669"/>
    <property type="project" value="UniProtKB-UniRule"/>
</dbReference>
<dbReference type="GO" id="GO:0000162">
    <property type="term" value="P:L-tryptophan biosynthetic process"/>
    <property type="evidence" value="ECO:0007669"/>
    <property type="project" value="TreeGrafter"/>
</dbReference>
<dbReference type="CDD" id="cd04732">
    <property type="entry name" value="HisA"/>
    <property type="match status" value="1"/>
</dbReference>
<dbReference type="FunFam" id="3.20.20.70:FF:000009">
    <property type="entry name" value="1-(5-phosphoribosyl)-5-[(5-phosphoribosylamino)methylideneamino] imidazole-4-carboxamide isomerase"/>
    <property type="match status" value="1"/>
</dbReference>
<dbReference type="Gene3D" id="3.20.20.70">
    <property type="entry name" value="Aldolase class I"/>
    <property type="match status" value="1"/>
</dbReference>
<dbReference type="HAMAP" id="MF_01014">
    <property type="entry name" value="HisA"/>
    <property type="match status" value="1"/>
</dbReference>
<dbReference type="InterPro" id="IPR013785">
    <property type="entry name" value="Aldolase_TIM"/>
</dbReference>
<dbReference type="InterPro" id="IPR006062">
    <property type="entry name" value="His_biosynth"/>
</dbReference>
<dbReference type="InterPro" id="IPR006063">
    <property type="entry name" value="HisA_bact_arch"/>
</dbReference>
<dbReference type="InterPro" id="IPR044524">
    <property type="entry name" value="Isoase_HisA-like"/>
</dbReference>
<dbReference type="InterPro" id="IPR023016">
    <property type="entry name" value="Isoase_HisA-like_bact"/>
</dbReference>
<dbReference type="InterPro" id="IPR011060">
    <property type="entry name" value="RibuloseP-bd_barrel"/>
</dbReference>
<dbReference type="NCBIfam" id="TIGR00007">
    <property type="entry name" value="1-(5-phosphoribosyl)-5-[(5-phosphoribosylamino)methylideneamino]imidazole-4-carboxamide isomerase"/>
    <property type="match status" value="1"/>
</dbReference>
<dbReference type="PANTHER" id="PTHR43090">
    <property type="entry name" value="1-(5-PHOSPHORIBOSYL)-5-[(5-PHOSPHORIBOSYLAMINO)METHYLIDENEAMINO] IMIDAZOLE-4-CARBOXAMIDE ISOMERASE"/>
    <property type="match status" value="1"/>
</dbReference>
<dbReference type="PANTHER" id="PTHR43090:SF2">
    <property type="entry name" value="1-(5-PHOSPHORIBOSYL)-5-[(5-PHOSPHORIBOSYLAMINO)METHYLIDENEAMINO] IMIDAZOLE-4-CARBOXAMIDE ISOMERASE"/>
    <property type="match status" value="1"/>
</dbReference>
<dbReference type="Pfam" id="PF00977">
    <property type="entry name" value="His_biosynth"/>
    <property type="match status" value="1"/>
</dbReference>
<dbReference type="SUPFAM" id="SSF51366">
    <property type="entry name" value="Ribulose-phoshate binding barrel"/>
    <property type="match status" value="1"/>
</dbReference>
<feature type="chain" id="PRO_1000135175" description="1-(5-phosphoribosyl)-5-[(5-phosphoribosylamino)methylideneamino] imidazole-4-carboxamide isomerase">
    <location>
        <begin position="1"/>
        <end position="245"/>
    </location>
</feature>
<feature type="active site" description="Proton acceptor" evidence="1">
    <location>
        <position position="7"/>
    </location>
</feature>
<feature type="active site" description="Proton donor" evidence="1">
    <location>
        <position position="129"/>
    </location>
</feature>
<reference key="1">
    <citation type="journal article" date="2010" name="J. Bacteriol.">
        <title>Genome sequence of the deep-rooted Yersinia pestis strain Angola reveals new insights into the evolution and pangenome of the plague bacterium.</title>
        <authorList>
            <person name="Eppinger M."/>
            <person name="Worsham P.L."/>
            <person name="Nikolich M.P."/>
            <person name="Riley D.R."/>
            <person name="Sebastian Y."/>
            <person name="Mou S."/>
            <person name="Achtman M."/>
            <person name="Lindler L.E."/>
            <person name="Ravel J."/>
        </authorList>
    </citation>
    <scope>NUCLEOTIDE SEQUENCE [LARGE SCALE GENOMIC DNA]</scope>
    <source>
        <strain>Angola</strain>
    </source>
</reference>
<sequence length="245" mass="26647">MIIPALDLIEGKVVRLHQGDYGQQRDYGNHPLPRLQDYQQQGAQVLHLVDLTGAKDPAARQIPLLRELLAGVDVPVQVGGGIRNEQDVVALLEAGAARVVVGSTAVKQPEMVQQWFERYGAEAIVLALDVRINEAGCKHVAISGWQENSDATLEQIVEQYLPYGLKHVLCTDISRDGTLSGSNVELYQEVCQRYPQVAFQASGGIGCLDDIARLRGSGVQGVIVGRALLDGKFNVKEAIACWQNV</sequence>